<comment type="function">
    <text evidence="1">Murein-degrading enzyme. May play a role in recycling of muropeptides during cell elongation and/or cell division.</text>
</comment>
<comment type="catalytic activity">
    <reaction evidence="1">
        <text>Exolytic cleavage of the (1-&gt;4)-beta-glycosidic linkage between N-acetylmuramic acid (MurNAc) and N-acetylglucosamine (GlcNAc) residues in peptidoglycan, from either the reducing or the non-reducing ends of the peptidoglycan chains, with concomitant formation of a 1,6-anhydrobond in the MurNAc residue.</text>
        <dbReference type="EC" id="4.2.2.n1"/>
    </reaction>
</comment>
<comment type="subcellular location">
    <subcellularLocation>
        <location evidence="1">Cell outer membrane</location>
        <topology evidence="1">Lipid-anchor</topology>
    </subcellularLocation>
</comment>
<comment type="similarity">
    <text evidence="1">Belongs to the transglycosylase Slt family.</text>
</comment>
<comment type="sequence caution" evidence="2">
    <conflict type="erroneous initiation">
        <sequence resource="EMBL-CDS" id="ABB63123"/>
    </conflict>
</comment>
<keyword id="KW-0998">Cell outer membrane</keyword>
<keyword id="KW-0961">Cell wall biogenesis/degradation</keyword>
<keyword id="KW-0449">Lipoprotein</keyword>
<keyword id="KW-0456">Lyase</keyword>
<keyword id="KW-0472">Membrane</keyword>
<keyword id="KW-0564">Palmitate</keyword>
<keyword id="KW-1185">Reference proteome</keyword>
<keyword id="KW-0732">Signal</keyword>
<gene>
    <name evidence="1" type="primary">mltC</name>
    <name type="ordered locus">SDY_3109</name>
</gene>
<feature type="signal peptide" evidence="1">
    <location>
        <begin position="1"/>
        <end position="16"/>
    </location>
</feature>
<feature type="chain" id="PRO_0000335588" description="Membrane-bound lytic murein transglycosylase C">
    <location>
        <begin position="17"/>
        <end position="359"/>
    </location>
</feature>
<feature type="lipid moiety-binding region" description="N-palmitoyl cysteine" evidence="1">
    <location>
        <position position="17"/>
    </location>
</feature>
<feature type="lipid moiety-binding region" description="S-diacylglycerol cysteine" evidence="1">
    <location>
        <position position="17"/>
    </location>
</feature>
<organism>
    <name type="scientific">Shigella dysenteriae serotype 1 (strain Sd197)</name>
    <dbReference type="NCBI Taxonomy" id="300267"/>
    <lineage>
        <taxon>Bacteria</taxon>
        <taxon>Pseudomonadati</taxon>
        <taxon>Pseudomonadota</taxon>
        <taxon>Gammaproteobacteria</taxon>
        <taxon>Enterobacterales</taxon>
        <taxon>Enterobacteriaceae</taxon>
        <taxon>Shigella</taxon>
    </lineage>
</organism>
<protein>
    <recommendedName>
        <fullName evidence="1">Membrane-bound lytic murein transglycosylase C</fullName>
        <ecNumber evidence="1">4.2.2.n1</ecNumber>
    </recommendedName>
    <alternativeName>
        <fullName evidence="1">Murein lyase C</fullName>
    </alternativeName>
</protein>
<accession>Q32C32</accession>
<sequence>MKKYLALALIAPLLISCSTTQKGDTYNEAWVKDTNGFDILMGQFAHNIENIWGFKEVVIAGPKDYVKYTDQYQTRSHINFDDGTITIETIAGTEPAAHLRRAIIKTLLMGDDPSSVDLYSDVDDITISKEPFLYGQVVDNTGQPIRWEGRASNFADYLLKNRLKSRSNGLRIIYSVTINMVPNHLDKRAHKYLGMVRQASRKYGVDESLILAIMQTESSFNPYAVSRSDALGLMQVVQHTAGKDVFRSQGKSGTPSRSFLFDPASNIDTGTAYLAMLNNVYLGGIDNPTSRRYAVITAYNGGAGSVLRVFSNDKIQAANIINTMTPGDVYQTLTTRHPSAESRRYLYKVNTAQKSYRRR</sequence>
<reference key="1">
    <citation type="journal article" date="2005" name="Nucleic Acids Res.">
        <title>Genome dynamics and diversity of Shigella species, the etiologic agents of bacillary dysentery.</title>
        <authorList>
            <person name="Yang F."/>
            <person name="Yang J."/>
            <person name="Zhang X."/>
            <person name="Chen L."/>
            <person name="Jiang Y."/>
            <person name="Yan Y."/>
            <person name="Tang X."/>
            <person name="Wang J."/>
            <person name="Xiong Z."/>
            <person name="Dong J."/>
            <person name="Xue Y."/>
            <person name="Zhu Y."/>
            <person name="Xu X."/>
            <person name="Sun L."/>
            <person name="Chen S."/>
            <person name="Nie H."/>
            <person name="Peng J."/>
            <person name="Xu J."/>
            <person name="Wang Y."/>
            <person name="Yuan Z."/>
            <person name="Wen Y."/>
            <person name="Yao Z."/>
            <person name="Shen Y."/>
            <person name="Qiang B."/>
            <person name="Hou Y."/>
            <person name="Yu J."/>
            <person name="Jin Q."/>
        </authorList>
    </citation>
    <scope>NUCLEOTIDE SEQUENCE [LARGE SCALE GENOMIC DNA]</scope>
    <source>
        <strain>Sd197</strain>
    </source>
</reference>
<dbReference type="EC" id="4.2.2.n1" evidence="1"/>
<dbReference type="EMBL" id="CP000034">
    <property type="protein sequence ID" value="ABB63123.1"/>
    <property type="status" value="ALT_INIT"/>
    <property type="molecule type" value="Genomic_DNA"/>
</dbReference>
<dbReference type="RefSeq" id="WP_024259418.1">
    <property type="nucleotide sequence ID" value="NC_007606.1"/>
</dbReference>
<dbReference type="RefSeq" id="YP_404614.1">
    <property type="nucleotide sequence ID" value="NC_007606.1"/>
</dbReference>
<dbReference type="SMR" id="Q32C32"/>
<dbReference type="STRING" id="300267.SDY_3109"/>
<dbReference type="CAZy" id="GH23">
    <property type="family name" value="Glycoside Hydrolase Family 23"/>
</dbReference>
<dbReference type="EnsemblBacteria" id="ABB63123">
    <property type="protein sequence ID" value="ABB63123"/>
    <property type="gene ID" value="SDY_3109"/>
</dbReference>
<dbReference type="KEGG" id="sdy:SDY_3109"/>
<dbReference type="PATRIC" id="fig|300267.13.peg.3718"/>
<dbReference type="HOGENOM" id="CLU_044583_0_0_6"/>
<dbReference type="Proteomes" id="UP000002716">
    <property type="component" value="Chromosome"/>
</dbReference>
<dbReference type="GO" id="GO:0009279">
    <property type="term" value="C:cell outer membrane"/>
    <property type="evidence" value="ECO:0007669"/>
    <property type="project" value="UniProtKB-SubCell"/>
</dbReference>
<dbReference type="GO" id="GO:0016798">
    <property type="term" value="F:hydrolase activity, acting on glycosyl bonds"/>
    <property type="evidence" value="ECO:0007669"/>
    <property type="project" value="InterPro"/>
</dbReference>
<dbReference type="GO" id="GO:0008933">
    <property type="term" value="F:peptidoglycan lytic transglycosylase activity"/>
    <property type="evidence" value="ECO:0007669"/>
    <property type="project" value="UniProtKB-UniRule"/>
</dbReference>
<dbReference type="GO" id="GO:0016998">
    <property type="term" value="P:cell wall macromolecule catabolic process"/>
    <property type="evidence" value="ECO:0007669"/>
    <property type="project" value="UniProtKB-UniRule"/>
</dbReference>
<dbReference type="GO" id="GO:0071555">
    <property type="term" value="P:cell wall organization"/>
    <property type="evidence" value="ECO:0007669"/>
    <property type="project" value="UniProtKB-KW"/>
</dbReference>
<dbReference type="GO" id="GO:0000270">
    <property type="term" value="P:peptidoglycan metabolic process"/>
    <property type="evidence" value="ECO:0007669"/>
    <property type="project" value="InterPro"/>
</dbReference>
<dbReference type="CDD" id="cd16893">
    <property type="entry name" value="LT_MltC_MltE"/>
    <property type="match status" value="1"/>
</dbReference>
<dbReference type="FunFam" id="1.10.530.10:FF:000002">
    <property type="entry name" value="Membrane-bound lytic murein transglycosylase C"/>
    <property type="match status" value="1"/>
</dbReference>
<dbReference type="Gene3D" id="1.10.530.10">
    <property type="match status" value="1"/>
</dbReference>
<dbReference type="HAMAP" id="MF_01616">
    <property type="entry name" value="MltC"/>
    <property type="match status" value="1"/>
</dbReference>
<dbReference type="InterPro" id="IPR023346">
    <property type="entry name" value="Lysozyme-like_dom_sf"/>
</dbReference>
<dbReference type="InterPro" id="IPR023664">
    <property type="entry name" value="Murein_transglycosylaseC"/>
</dbReference>
<dbReference type="InterPro" id="IPR024570">
    <property type="entry name" value="Murein_transglycosylaseC_N"/>
</dbReference>
<dbReference type="InterPro" id="IPR000189">
    <property type="entry name" value="Transglyc_AS"/>
</dbReference>
<dbReference type="InterPro" id="IPR008258">
    <property type="entry name" value="Transglycosylase_SLT_dom_1"/>
</dbReference>
<dbReference type="NCBIfam" id="NF008670">
    <property type="entry name" value="PRK11671.1"/>
    <property type="match status" value="1"/>
</dbReference>
<dbReference type="PANTHER" id="PTHR37423:SF2">
    <property type="entry name" value="MEMBRANE-BOUND LYTIC MUREIN TRANSGLYCOSYLASE C"/>
    <property type="match status" value="1"/>
</dbReference>
<dbReference type="PANTHER" id="PTHR37423">
    <property type="entry name" value="SOLUBLE LYTIC MUREIN TRANSGLYCOSYLASE-RELATED"/>
    <property type="match status" value="1"/>
</dbReference>
<dbReference type="Pfam" id="PF11873">
    <property type="entry name" value="Mltc_N"/>
    <property type="match status" value="1"/>
</dbReference>
<dbReference type="Pfam" id="PF01464">
    <property type="entry name" value="SLT"/>
    <property type="match status" value="1"/>
</dbReference>
<dbReference type="SUPFAM" id="SSF53955">
    <property type="entry name" value="Lysozyme-like"/>
    <property type="match status" value="1"/>
</dbReference>
<dbReference type="PROSITE" id="PS51257">
    <property type="entry name" value="PROKAR_LIPOPROTEIN"/>
    <property type="match status" value="1"/>
</dbReference>
<dbReference type="PROSITE" id="PS00922">
    <property type="entry name" value="TRANSGLYCOSYLASE"/>
    <property type="match status" value="1"/>
</dbReference>
<evidence type="ECO:0000255" key="1">
    <source>
        <dbReference type="HAMAP-Rule" id="MF_01616"/>
    </source>
</evidence>
<evidence type="ECO:0000305" key="2"/>
<proteinExistence type="inferred from homology"/>
<name>MLTC_SHIDS</name>